<accession>Q6NRM0</accession>
<dbReference type="EMBL" id="BC070727">
    <property type="protein sequence ID" value="AAH70727.1"/>
    <property type="molecule type" value="mRNA"/>
</dbReference>
<dbReference type="RefSeq" id="NP_001084918.1">
    <property type="nucleotide sequence ID" value="NM_001091449.1"/>
</dbReference>
<dbReference type="DNASU" id="431970"/>
<dbReference type="GeneID" id="431970"/>
<dbReference type="KEGG" id="xla:431970"/>
<dbReference type="AGR" id="Xenbase:XB-GENE-978537"/>
<dbReference type="CTD" id="431970"/>
<dbReference type="Xenbase" id="XB-GENE-978537">
    <property type="gene designation" value="ikzf5.L"/>
</dbReference>
<dbReference type="OrthoDB" id="5576026at2759"/>
<dbReference type="Proteomes" id="UP000186698">
    <property type="component" value="Chromosome 7L"/>
</dbReference>
<dbReference type="Bgee" id="431970">
    <property type="expression patterns" value="Expressed in egg cell and 19 other cell types or tissues"/>
</dbReference>
<dbReference type="GO" id="GO:0005634">
    <property type="term" value="C:nucleus"/>
    <property type="evidence" value="ECO:0000250"/>
    <property type="project" value="UniProtKB"/>
</dbReference>
<dbReference type="GO" id="GO:0003682">
    <property type="term" value="F:chromatin binding"/>
    <property type="evidence" value="ECO:0000250"/>
    <property type="project" value="UniProtKB"/>
</dbReference>
<dbReference type="GO" id="GO:0003700">
    <property type="term" value="F:DNA-binding transcription factor activity"/>
    <property type="evidence" value="ECO:0000318"/>
    <property type="project" value="GO_Central"/>
</dbReference>
<dbReference type="GO" id="GO:0000978">
    <property type="term" value="F:RNA polymerase II cis-regulatory region sequence-specific DNA binding"/>
    <property type="evidence" value="ECO:0000318"/>
    <property type="project" value="GO_Central"/>
</dbReference>
<dbReference type="GO" id="GO:0008270">
    <property type="term" value="F:zinc ion binding"/>
    <property type="evidence" value="ECO:0007669"/>
    <property type="project" value="UniProtKB-KW"/>
</dbReference>
<dbReference type="GO" id="GO:0006357">
    <property type="term" value="P:regulation of transcription by RNA polymerase II"/>
    <property type="evidence" value="ECO:0000318"/>
    <property type="project" value="GO_Central"/>
</dbReference>
<dbReference type="FunFam" id="3.30.160.60:FF:000402">
    <property type="entry name" value="IKAROS family zinc finger 5"/>
    <property type="match status" value="1"/>
</dbReference>
<dbReference type="FunFam" id="3.30.160.60:FF:000924">
    <property type="entry name" value="IKAROS family zinc finger 5"/>
    <property type="match status" value="1"/>
</dbReference>
<dbReference type="FunFam" id="3.30.160.60:FF:001097">
    <property type="entry name" value="IKAROS family zinc finger 5"/>
    <property type="match status" value="1"/>
</dbReference>
<dbReference type="Gene3D" id="3.30.160.60">
    <property type="entry name" value="Classic Zinc Finger"/>
    <property type="match status" value="4"/>
</dbReference>
<dbReference type="InterPro" id="IPR050589">
    <property type="entry name" value="Ikaros_C2H2-ZF"/>
</dbReference>
<dbReference type="InterPro" id="IPR036236">
    <property type="entry name" value="Znf_C2H2_sf"/>
</dbReference>
<dbReference type="InterPro" id="IPR013087">
    <property type="entry name" value="Znf_C2H2_type"/>
</dbReference>
<dbReference type="PANTHER" id="PTHR24404">
    <property type="entry name" value="ZINC FINGER PROTEIN"/>
    <property type="match status" value="1"/>
</dbReference>
<dbReference type="PANTHER" id="PTHR24404:SF55">
    <property type="entry name" value="ZINC FINGER PROTEIN PEGASUS"/>
    <property type="match status" value="1"/>
</dbReference>
<dbReference type="SMART" id="SM00355">
    <property type="entry name" value="ZnF_C2H2"/>
    <property type="match status" value="5"/>
</dbReference>
<dbReference type="SUPFAM" id="SSF57667">
    <property type="entry name" value="beta-beta-alpha zinc fingers"/>
    <property type="match status" value="3"/>
</dbReference>
<dbReference type="PROSITE" id="PS00028">
    <property type="entry name" value="ZINC_FINGER_C2H2_1"/>
    <property type="match status" value="2"/>
</dbReference>
<dbReference type="PROSITE" id="PS50157">
    <property type="entry name" value="ZINC_FINGER_C2H2_2"/>
    <property type="match status" value="3"/>
</dbReference>
<evidence type="ECO:0000250" key="1"/>
<evidence type="ECO:0000250" key="2">
    <source>
        <dbReference type="UniProtKB" id="Q9H5V7"/>
    </source>
</evidence>
<evidence type="ECO:0000255" key="3">
    <source>
        <dbReference type="PROSITE-ProRule" id="PRU00042"/>
    </source>
</evidence>
<evidence type="ECO:0000256" key="4">
    <source>
        <dbReference type="SAM" id="MobiDB-lite"/>
    </source>
</evidence>
<evidence type="ECO:0000305" key="5"/>
<proteinExistence type="evidence at transcript level"/>
<name>IKZF5_XENLA</name>
<comment type="function">
    <text evidence="2">Transcriptional repressor that binds the core 5'GNNTGTNG-3' DNA consensus sequence.</text>
</comment>
<comment type="subunit">
    <text evidence="1">Probably self-associates.</text>
</comment>
<comment type="subcellular location">
    <subcellularLocation>
        <location evidence="2">Nucleus</location>
    </subcellularLocation>
</comment>
<comment type="miscellaneous">
    <text>'Pegasus' was the winged horse in Greek mythology.</text>
</comment>
<comment type="similarity">
    <text evidence="5">Belongs to the Ikaros C2H2-type zinc-finger protein family.</text>
</comment>
<feature type="chain" id="PRO_0000299476" description="Zinc finger protein Pegasus">
    <location>
        <begin position="1"/>
        <end position="453"/>
    </location>
</feature>
<feature type="zinc finger region" description="C2H2-type 1" evidence="3">
    <location>
        <begin position="101"/>
        <end position="123"/>
    </location>
</feature>
<feature type="zinc finger region" description="C2H2-type 2" evidence="3">
    <location>
        <begin position="129"/>
        <end position="151"/>
    </location>
</feature>
<feature type="zinc finger region" description="C2H2-type 3" evidence="3">
    <location>
        <begin position="157"/>
        <end position="180"/>
    </location>
</feature>
<feature type="zinc finger region" description="C2H2-type 4" evidence="3">
    <location>
        <begin position="383"/>
        <end position="405"/>
    </location>
</feature>
<feature type="zinc finger region" description="C2H2-type 5" evidence="3">
    <location>
        <begin position="411"/>
        <end position="438"/>
    </location>
</feature>
<feature type="region of interest" description="Disordered" evidence="4">
    <location>
        <begin position="279"/>
        <end position="375"/>
    </location>
</feature>
<feature type="compositionally biased region" description="Polar residues" evidence="4">
    <location>
        <begin position="279"/>
        <end position="293"/>
    </location>
</feature>
<feature type="compositionally biased region" description="Low complexity" evidence="4">
    <location>
        <begin position="315"/>
        <end position="332"/>
    </location>
</feature>
<feature type="compositionally biased region" description="Polar residues" evidence="4">
    <location>
        <begin position="356"/>
        <end position="368"/>
    </location>
</feature>
<keyword id="KW-0238">DNA-binding</keyword>
<keyword id="KW-0479">Metal-binding</keyword>
<keyword id="KW-0539">Nucleus</keyword>
<keyword id="KW-1185">Reference proteome</keyword>
<keyword id="KW-0677">Repeat</keyword>
<keyword id="KW-0678">Repressor</keyword>
<keyword id="KW-0804">Transcription</keyword>
<keyword id="KW-0805">Transcription regulation</keyword>
<keyword id="KW-0862">Zinc</keyword>
<keyword id="KW-0863">Zinc-finger</keyword>
<sequence length="453" mass="49967">MGEKKPETLDFVKDFQEYLTQQTHHVNMISGSVSSDKEAETLQGGTQNHDALSANSPCLALPAAATDSDQNGLDHPSVEVSLDESAGMLVDGFERTFDGKLKCRYCNYASKGTARLIEHIRIHTGEKPHRCHLCPFASAYERHLEAHMRSHTGEKPYKCELCSFRCSDRSNLSHHRRRKHKMLPIKGTRPSLGNKKMWGVLQKKVSSLGYTRRTLINLSPPSMVVHKADYLSDFAHEIPSIQSEAYEHLAKASHSVGLSRDPQELMVDNPLNQLSTLAGQLSSLPPDTQNPASPDTGPCPDEKPFMIQQPPPPACSSAVSTSVAQSSSPASPEGRPSHNHRNCSPMAGPSSERSGRTSTPSISNSQPSTPAPALPVQDPQLLHHCQHCDMYFADNILYTIHMGCHGFENPFQCNICGCKCKNKYDFACHFARGACCQHSSRCAFRRTDDHVTK</sequence>
<protein>
    <recommendedName>
        <fullName>Zinc finger protein Pegasus</fullName>
    </recommendedName>
    <alternativeName>
        <fullName>Ikaros family zinc finger protein 5</fullName>
    </alternativeName>
</protein>
<reference key="1">
    <citation type="submission" date="2004-05" db="EMBL/GenBank/DDBJ databases">
        <authorList>
            <consortium name="NIH - Xenopus Gene Collection (XGC) project"/>
        </authorList>
    </citation>
    <scope>NUCLEOTIDE SEQUENCE [LARGE SCALE MRNA]</scope>
    <source>
        <tissue>Oocyte</tissue>
    </source>
</reference>
<gene>
    <name type="primary">ikzf5</name>
</gene>
<organism>
    <name type="scientific">Xenopus laevis</name>
    <name type="common">African clawed frog</name>
    <dbReference type="NCBI Taxonomy" id="8355"/>
    <lineage>
        <taxon>Eukaryota</taxon>
        <taxon>Metazoa</taxon>
        <taxon>Chordata</taxon>
        <taxon>Craniata</taxon>
        <taxon>Vertebrata</taxon>
        <taxon>Euteleostomi</taxon>
        <taxon>Amphibia</taxon>
        <taxon>Batrachia</taxon>
        <taxon>Anura</taxon>
        <taxon>Pipoidea</taxon>
        <taxon>Pipidae</taxon>
        <taxon>Xenopodinae</taxon>
        <taxon>Xenopus</taxon>
        <taxon>Xenopus</taxon>
    </lineage>
</organism>